<accession>Q04W32</accession>
<dbReference type="EMBL" id="CP000350">
    <property type="protein sequence ID" value="ABJ74888.1"/>
    <property type="molecule type" value="Genomic_DNA"/>
</dbReference>
<dbReference type="RefSeq" id="WP_002724440.1">
    <property type="nucleotide sequence ID" value="NC_008510.1"/>
</dbReference>
<dbReference type="SMR" id="Q04W32"/>
<dbReference type="GeneID" id="61172324"/>
<dbReference type="KEGG" id="lbj:LBJ_0145"/>
<dbReference type="HOGENOM" id="CLU_129938_2_0_12"/>
<dbReference type="Proteomes" id="UP000000656">
    <property type="component" value="Chromosome 1"/>
</dbReference>
<dbReference type="GO" id="GO:1990904">
    <property type="term" value="C:ribonucleoprotein complex"/>
    <property type="evidence" value="ECO:0007669"/>
    <property type="project" value="UniProtKB-KW"/>
</dbReference>
<dbReference type="GO" id="GO:0005840">
    <property type="term" value="C:ribosome"/>
    <property type="evidence" value="ECO:0007669"/>
    <property type="project" value="UniProtKB-KW"/>
</dbReference>
<dbReference type="GO" id="GO:0003735">
    <property type="term" value="F:structural constituent of ribosome"/>
    <property type="evidence" value="ECO:0007669"/>
    <property type="project" value="InterPro"/>
</dbReference>
<dbReference type="GO" id="GO:0006412">
    <property type="term" value="P:translation"/>
    <property type="evidence" value="ECO:0007669"/>
    <property type="project" value="UniProtKB-UniRule"/>
</dbReference>
<dbReference type="FunFam" id="1.10.287.3980:FF:000001">
    <property type="entry name" value="Mitochondrial ribosomal protein L34"/>
    <property type="match status" value="1"/>
</dbReference>
<dbReference type="Gene3D" id="1.10.287.3980">
    <property type="match status" value="1"/>
</dbReference>
<dbReference type="HAMAP" id="MF_00391">
    <property type="entry name" value="Ribosomal_bL34"/>
    <property type="match status" value="1"/>
</dbReference>
<dbReference type="InterPro" id="IPR000271">
    <property type="entry name" value="Ribosomal_bL34"/>
</dbReference>
<dbReference type="InterPro" id="IPR020939">
    <property type="entry name" value="Ribosomal_bL34_CS"/>
</dbReference>
<dbReference type="NCBIfam" id="TIGR01030">
    <property type="entry name" value="rpmH_bact"/>
    <property type="match status" value="1"/>
</dbReference>
<dbReference type="PANTHER" id="PTHR14503:SF4">
    <property type="entry name" value="LARGE RIBOSOMAL SUBUNIT PROTEIN BL34M"/>
    <property type="match status" value="1"/>
</dbReference>
<dbReference type="PANTHER" id="PTHR14503">
    <property type="entry name" value="MITOCHONDRIAL RIBOSOMAL PROTEIN 34 FAMILY MEMBER"/>
    <property type="match status" value="1"/>
</dbReference>
<dbReference type="Pfam" id="PF00468">
    <property type="entry name" value="Ribosomal_L34"/>
    <property type="match status" value="1"/>
</dbReference>
<dbReference type="PROSITE" id="PS00784">
    <property type="entry name" value="RIBOSOMAL_L34"/>
    <property type="match status" value="1"/>
</dbReference>
<keyword id="KW-0687">Ribonucleoprotein</keyword>
<keyword id="KW-0689">Ribosomal protein</keyword>
<feature type="chain" id="PRO_1000013365" description="Large ribosomal subunit protein bL34">
    <location>
        <begin position="1"/>
        <end position="53"/>
    </location>
</feature>
<gene>
    <name evidence="1" type="primary">rpmH</name>
    <name type="ordered locus">LBJ_0145</name>
</gene>
<protein>
    <recommendedName>
        <fullName evidence="1">Large ribosomal subunit protein bL34</fullName>
    </recommendedName>
    <alternativeName>
        <fullName evidence="2">50S ribosomal protein L34</fullName>
    </alternativeName>
</protein>
<reference key="1">
    <citation type="journal article" date="2006" name="Proc. Natl. Acad. Sci. U.S.A.">
        <title>Genome reduction in Leptospira borgpetersenii reflects limited transmission potential.</title>
        <authorList>
            <person name="Bulach D.M."/>
            <person name="Zuerner R.L."/>
            <person name="Wilson P."/>
            <person name="Seemann T."/>
            <person name="McGrath A."/>
            <person name="Cullen P.A."/>
            <person name="Davis J."/>
            <person name="Johnson M."/>
            <person name="Kuczek E."/>
            <person name="Alt D.P."/>
            <person name="Peterson-Burch B."/>
            <person name="Coppel R.L."/>
            <person name="Rood J.I."/>
            <person name="Davies J.K."/>
            <person name="Adler B."/>
        </authorList>
    </citation>
    <scope>NUCLEOTIDE SEQUENCE [LARGE SCALE GENOMIC DNA]</scope>
    <source>
        <strain>JB197</strain>
    </source>
</reference>
<sequence length="53" mass="6279">MKRNYQPSRVKRARTHGFRARMATAGGRKVLSRRRKKGRYKLTVSNEKLGKKY</sequence>
<evidence type="ECO:0000255" key="1">
    <source>
        <dbReference type="HAMAP-Rule" id="MF_00391"/>
    </source>
</evidence>
<evidence type="ECO:0000305" key="2"/>
<organism>
    <name type="scientific">Leptospira borgpetersenii serovar Hardjo-bovis (strain JB197)</name>
    <dbReference type="NCBI Taxonomy" id="355277"/>
    <lineage>
        <taxon>Bacteria</taxon>
        <taxon>Pseudomonadati</taxon>
        <taxon>Spirochaetota</taxon>
        <taxon>Spirochaetia</taxon>
        <taxon>Leptospirales</taxon>
        <taxon>Leptospiraceae</taxon>
        <taxon>Leptospira</taxon>
    </lineage>
</organism>
<proteinExistence type="inferred from homology"/>
<name>RL34_LEPBJ</name>
<comment type="similarity">
    <text evidence="1">Belongs to the bacterial ribosomal protein bL34 family.</text>
</comment>